<reference evidence="4" key="1">
    <citation type="journal article" date="2005" name="Peptides">
        <title>Peptidomics of neurohemal organs from species of the cockroach family Blattidae: how do neuropeptides of closely related species differ?</title>
        <authorList>
            <person name="Predel R."/>
            <person name="Gaede G."/>
        </authorList>
    </citation>
    <scope>PROTEIN SEQUENCE</scope>
    <scope>MASS SPECTROMETRY</scope>
    <scope>AMIDATION AT VAL-11</scope>
    <source>
        <tissue evidence="2">Abdominal perisympathetic organs</tissue>
    </source>
</reference>
<reference key="2">
    <citation type="journal article" date="2009" name="BMC Evol. Biol.">
        <title>A proteomic approach for studying insect phylogeny: CAPA peptides of ancient insect taxa (Dictyoptera, Blattoptera) as a test case.</title>
        <authorList>
            <person name="Roth S."/>
            <person name="Fromm B."/>
            <person name="Gaede G."/>
            <person name="Predel R."/>
        </authorList>
    </citation>
    <scope>PROTEIN SEQUENCE</scope>
    <scope>AMIDATION AT VAL-11</scope>
    <source>
        <tissue>Abdominal perisympathetic organs</tissue>
    </source>
</reference>
<evidence type="ECO:0000255" key="1"/>
<evidence type="ECO:0000269" key="2">
    <source>
    </source>
</evidence>
<evidence type="ECO:0000269" key="3">
    <source>
    </source>
</evidence>
<evidence type="ECO:0000305" key="4"/>
<accession>P84426</accession>
<proteinExistence type="evidence at protein level"/>
<name>PVK22_BLAOR</name>
<feature type="peptide" id="PRO_0000044258" description="Periviscerokinin-2.2">
    <location>
        <begin position="1"/>
        <end position="11"/>
    </location>
</feature>
<feature type="modified residue" description="Valine amide" evidence="2 3">
    <location>
        <position position="11"/>
    </location>
</feature>
<keyword id="KW-0027">Amidation</keyword>
<keyword id="KW-0903">Direct protein sequencing</keyword>
<keyword id="KW-0527">Neuropeptide</keyword>
<keyword id="KW-0964">Secreted</keyword>
<comment type="function">
    <text evidence="4">Mediates visceral muscle contractile activity (myotropic activity).</text>
</comment>
<comment type="subcellular location">
    <subcellularLocation>
        <location evidence="4">Secreted</location>
    </subcellularLocation>
</comment>
<comment type="mass spectrometry"/>
<comment type="similarity">
    <text evidence="1">Belongs to the periviscerokinin family.</text>
</comment>
<organism>
    <name type="scientific">Blatta orientalis</name>
    <name type="common">Oriental cockroach</name>
    <dbReference type="NCBI Taxonomy" id="6976"/>
    <lineage>
        <taxon>Eukaryota</taxon>
        <taxon>Metazoa</taxon>
        <taxon>Ecdysozoa</taxon>
        <taxon>Arthropoda</taxon>
        <taxon>Hexapoda</taxon>
        <taxon>Insecta</taxon>
        <taxon>Pterygota</taxon>
        <taxon>Neoptera</taxon>
        <taxon>Polyneoptera</taxon>
        <taxon>Dictyoptera</taxon>
        <taxon>Blattodea</taxon>
        <taxon>Blattoidea</taxon>
        <taxon>Blattidae</taxon>
        <taxon>Blattinae</taxon>
        <taxon>Blatta</taxon>
    </lineage>
</organism>
<sequence>GSSGLISMPRV</sequence>
<protein>
    <recommendedName>
        <fullName>Periviscerokinin-2.2</fullName>
    </recommendedName>
    <alternativeName>
        <fullName>Lem-PVK-2-like peptide</fullName>
    </alternativeName>
    <alternativeName>
        <fullName>Periviscerokinin-2</fullName>
        <shortName>BlaOr-PVK-2</shortName>
    </alternativeName>
</protein>
<dbReference type="GO" id="GO:0005576">
    <property type="term" value="C:extracellular region"/>
    <property type="evidence" value="ECO:0007669"/>
    <property type="project" value="UniProtKB-SubCell"/>
</dbReference>
<dbReference type="GO" id="GO:0007218">
    <property type="term" value="P:neuropeptide signaling pathway"/>
    <property type="evidence" value="ECO:0007669"/>
    <property type="project" value="UniProtKB-KW"/>
</dbReference>
<dbReference type="InterPro" id="IPR013231">
    <property type="entry name" value="Periviscerokinin"/>
</dbReference>
<dbReference type="Pfam" id="PF08259">
    <property type="entry name" value="Periviscerokin"/>
    <property type="match status" value="1"/>
</dbReference>